<organism>
    <name type="scientific">Streptomyces antibioticus</name>
    <dbReference type="NCBI Taxonomy" id="1890"/>
    <lineage>
        <taxon>Bacteria</taxon>
        <taxon>Bacillati</taxon>
        <taxon>Actinomycetota</taxon>
        <taxon>Actinomycetes</taxon>
        <taxon>Kitasatosporales</taxon>
        <taxon>Streptomycetaceae</taxon>
        <taxon>Streptomyces</taxon>
    </lineage>
</organism>
<feature type="chain" id="PRO_0000444208" description="Glucose-1-phosphate thymidylyltransferase">
    <location>
        <begin position="1"/>
        <end position="356"/>
    </location>
</feature>
<feature type="binding site" evidence="1">
    <location>
        <position position="107"/>
    </location>
    <ligand>
        <name>Mg(2+)</name>
        <dbReference type="ChEBI" id="CHEBI:18420"/>
    </ligand>
</feature>
<feature type="binding site" evidence="1">
    <location>
        <position position="221"/>
    </location>
    <ligand>
        <name>Mg(2+)</name>
        <dbReference type="ChEBI" id="CHEBI:18420"/>
    </ligand>
</feature>
<keyword id="KW-0045">Antibiotic biosynthesis</keyword>
<keyword id="KW-0460">Magnesium</keyword>
<keyword id="KW-0479">Metal-binding</keyword>
<keyword id="KW-0548">Nucleotidyltransferase</keyword>
<keyword id="KW-0808">Transferase</keyword>
<protein>
    <recommendedName>
        <fullName evidence="3">Glucose-1-phosphate thymidylyltransferase</fullName>
        <ecNumber evidence="1">2.7.7.24</ecNumber>
    </recommendedName>
</protein>
<accession>Q9RR29</accession>
<sequence>MKALVLAGGSGTRLRPITHTSAKQLVAVANKPVLFYGLEAIAAAGITDVGLIVGDTAGEVPRAVGDGAKFGLDITYIEQSRPLGLAHAVLIAHTYLGDDDFVMYLGDNFIVGGIDDLVRTFRDGRRPAARILLTHVSDPSGFGVAELDDDGRVVGLEEKPRHPKSDLALVGVYFFTPAIHEAVRAIEPSWRGELEITHAIQHLIDNGADIQSMVIEGYWKDTGNVADMLEVNRTVLEDLEPRIEGTVDEHTVVIGRVVVGEGARVTNSRIMGPAIIGAGPEISDSYIGPFTSVGDNCRITGSEMEFSIMLAESAITGVRRIEGSLIGRNVQVTQSLHAPNAHRFVLGDHSKVEIQS</sequence>
<proteinExistence type="inferred from homology"/>
<name>OLES_STRAT</name>
<evidence type="ECO:0000250" key="1">
    <source>
        <dbReference type="UniProtKB" id="P61887"/>
    </source>
</evidence>
<evidence type="ECO:0000269" key="2">
    <source>
    </source>
</evidence>
<evidence type="ECO:0000303" key="3">
    <source>
    </source>
</evidence>
<evidence type="ECO:0000305" key="4"/>
<evidence type="ECO:0000305" key="5">
    <source>
    </source>
</evidence>
<evidence type="ECO:0000312" key="6">
    <source>
        <dbReference type="EMBL" id="AAD55453.1"/>
    </source>
</evidence>
<reference key="1">
    <citation type="journal article" date="2000" name="Antimicrob. Agents Chemother.">
        <title>Identification and expression of genes involved in biosynthesis of L-oleandrose and its intermediate L-olivose in the oleandomycin producer Streptomyces antibioticus.</title>
        <authorList>
            <person name="Aguirrezabalaga I."/>
            <person name="Olano C."/>
            <person name="Allende N."/>
            <person name="Rodriguez L."/>
            <person name="Brana A.F."/>
            <person name="Mendez C."/>
            <person name="Salas J.A."/>
        </authorList>
    </citation>
    <scope>NUCLEOTIDE SEQUENCE [GENOMIC DNA]</scope>
    <scope>FUNCTION</scope>
    <scope>PATHWAY</scope>
    <source>
        <strain evidence="6">ATCC 11891 / DSM 40868 / BCRC 11580 / NCIMB 11506 / PSA 205</strain>
    </source>
</reference>
<gene>
    <name evidence="3" type="primary">oleS</name>
</gene>
<dbReference type="EC" id="2.7.7.24" evidence="1"/>
<dbReference type="EMBL" id="AF055579">
    <property type="protein sequence ID" value="AAD55453.1"/>
    <property type="molecule type" value="Genomic_DNA"/>
</dbReference>
<dbReference type="PIR" id="T51105">
    <property type="entry name" value="T51105"/>
</dbReference>
<dbReference type="SMR" id="Q9RR29"/>
<dbReference type="BioCyc" id="MetaCyc:MONOMER-17069"/>
<dbReference type="GO" id="GO:0008879">
    <property type="term" value="F:glucose-1-phosphate thymidylyltransferase activity"/>
    <property type="evidence" value="ECO:0007669"/>
    <property type="project" value="UniProtKB-EC"/>
</dbReference>
<dbReference type="GO" id="GO:0046872">
    <property type="term" value="F:metal ion binding"/>
    <property type="evidence" value="ECO:0007669"/>
    <property type="project" value="UniProtKB-KW"/>
</dbReference>
<dbReference type="GO" id="GO:0017000">
    <property type="term" value="P:antibiotic biosynthetic process"/>
    <property type="evidence" value="ECO:0007669"/>
    <property type="project" value="UniProtKB-KW"/>
</dbReference>
<dbReference type="CDD" id="cd04189">
    <property type="entry name" value="G1P_TT_long"/>
    <property type="match status" value="1"/>
</dbReference>
<dbReference type="Gene3D" id="2.160.10.10">
    <property type="entry name" value="Hexapeptide repeat proteins"/>
    <property type="match status" value="1"/>
</dbReference>
<dbReference type="Gene3D" id="3.90.550.10">
    <property type="entry name" value="Spore Coat Polysaccharide Biosynthesis Protein SpsA, Chain A"/>
    <property type="match status" value="1"/>
</dbReference>
<dbReference type="InterPro" id="IPR005908">
    <property type="entry name" value="G1P_thy_trans_l"/>
</dbReference>
<dbReference type="InterPro" id="IPR005835">
    <property type="entry name" value="NTP_transferase_dom"/>
</dbReference>
<dbReference type="InterPro" id="IPR029044">
    <property type="entry name" value="Nucleotide-diphossugar_trans"/>
</dbReference>
<dbReference type="NCBIfam" id="TIGR01208">
    <property type="entry name" value="rmlA_long"/>
    <property type="match status" value="1"/>
</dbReference>
<dbReference type="PANTHER" id="PTHR42883">
    <property type="entry name" value="GLUCOSE-1-PHOSPHATE THYMIDYLTRANSFERASE"/>
    <property type="match status" value="1"/>
</dbReference>
<dbReference type="PANTHER" id="PTHR42883:SF2">
    <property type="entry name" value="THYMIDYLYLTRANSFERASE"/>
    <property type="match status" value="1"/>
</dbReference>
<dbReference type="Pfam" id="PF00483">
    <property type="entry name" value="NTP_transferase"/>
    <property type="match status" value="1"/>
</dbReference>
<dbReference type="SUPFAM" id="SSF53448">
    <property type="entry name" value="Nucleotide-diphospho-sugar transferases"/>
    <property type="match status" value="1"/>
</dbReference>
<comment type="function">
    <text evidence="1 2">Involved in the biosynthesis of the two 2,6-deoxysugars, dTDP-L-oleandrose and dTDP-D-desosamine, attached to the macrolactone ring oleandolide to produce the aglycone antibiotic oleandomycin (PubMed:10770761). Catalyzes the formation of dTDP-glucose from deoxythymidine triphosphate (dTTP) and glucose 1-phosphate (By similarity).</text>
</comment>
<comment type="catalytic activity">
    <reaction evidence="1">
        <text>dTTP + alpha-D-glucose 1-phosphate + H(+) = dTDP-alpha-D-glucose + diphosphate</text>
        <dbReference type="Rhea" id="RHEA:15225"/>
        <dbReference type="ChEBI" id="CHEBI:15378"/>
        <dbReference type="ChEBI" id="CHEBI:33019"/>
        <dbReference type="ChEBI" id="CHEBI:37568"/>
        <dbReference type="ChEBI" id="CHEBI:57477"/>
        <dbReference type="ChEBI" id="CHEBI:58601"/>
        <dbReference type="EC" id="2.7.7.24"/>
    </reaction>
</comment>
<comment type="cofactor">
    <cofactor evidence="1">
        <name>Mg(2+)</name>
        <dbReference type="ChEBI" id="CHEBI:18420"/>
    </cofactor>
    <text evidence="1">Binds 1 Mg(2+) ion per subunit.</text>
</comment>
<comment type="pathway">
    <text evidence="5">Antibiotic biosynthesis.</text>
</comment>
<comment type="similarity">
    <text evidence="4">Belongs to the glucose-1-phosphate thymidylyltransferase family.</text>
</comment>